<proteinExistence type="inferred from homology"/>
<comment type="function">
    <text evidence="1">Antimicrobial protein that is an integral component of the innate immune system (By similarity). Binds to bacterial lipopolysaccharides (LPS) (By similarity). Acts via neutrophil N-formyl peptide receptors to enhance the release of CXCL2 (By similarity). Postsecretory processing generates multiple cathelicidin antimicrobial peptides with various lengths which act as a topical antimicrobial defense in sweat on skin (By similarity). The unprocessed precursor form, cathelicidin antimicrobial peptide, inhibits the growth of Gram-negative E.coli and E.aerogenes with efficiencies comparable to that of the mature peptide LL-37 (in vitro) (By similarity).</text>
</comment>
<comment type="function">
    <molecule>Antibacterial peptide LL-37</molecule>
    <text evidence="1">Antimicrobial peptide that is an integral component of the innate immune system (By similarity). Binds to bacterial lipopolysaccharides (LPS) (By similarity). Causes membrane permeabilization by forming transmembrane pores (in vitro) (By similarity). Causes lysis of E.coli (By similarity). Exhibits antimicrobial activity against Gram-negative bacteria such as P.aeruginosa, S.typhimurium, E.aerogenes, E.coli and P.syringae, Gram-positive bacteria such as L.monocytogenes, S.epidermidis, S.pyogenes and S.aureus, as well as vancomycin-resistant enterococci (in vitro) (By similarity). Exhibits antimicrobial activity against methicillin-resistant S.aureus, P.mirabilis, and C.albicans in low-salt media, but not in media containing 100 mM NaCl (in vitro) (By similarity). Forms chiral supramolecular assemblies with quinolone signal (PQS) molecules of P.aeruginosa, which may lead to interference of bacterial quorum signaling and perturbance of bacterial biofilm formation (By similarity). May form supramolecular fiber-like assemblies on bacterial membranes (By similarity). Induces cytokine and chemokine producation as well as TNF/TNFA and CSF2/GMCSF production in normal human keratinocytes (By similarity). Exhibits hemolytic activity against red blood cells (By similarity).</text>
</comment>
<comment type="function">
    <molecule>Antibacterial peptide FALL-39</molecule>
    <text evidence="1">Exhibits antimicrobial activity against E.coli and B.megaterium (in vitro).</text>
</comment>
<comment type="subunit">
    <molecule>Antibacterial peptide LL-37</molecule>
    <text evidence="1">Monomer, homodimer or homotrimer (in vitro) (By similarity). Oligomerizes as tetra- or hexamer in solution (in vitro) (By similarity).</text>
</comment>
<comment type="subcellular location">
    <subcellularLocation>
        <location evidence="2">Secreted</location>
    </subcellularLocation>
    <subcellularLocation>
        <location evidence="2">Vesicle</location>
    </subcellularLocation>
    <text evidence="2">Stored as pro-peptide in granules and phagolysosomes of neutrophils (By similarity). Secreted in sweat onto skin (By similarity).</text>
</comment>
<comment type="domain">
    <text evidence="2">The cathelin-like domain (CLD), which is the propeptide part, does not seem to exhibit auto-inhibitory function, as it does not inhibit the antibacterial activity of antibacterial peptide LL-37.</text>
</comment>
<comment type="domain">
    <molecule>Antibacterial peptide LL-37</molecule>
    <text evidence="2">Undergoes conformational change in the presence of lipid A, transitioning from a random coil to an alpha-helical structure.</text>
</comment>
<comment type="domain">
    <molecule>Antibacterial peptide LL-37</molecule>
    <text evidence="2">Residues 17-29 of LL-37 represent the active core of the antimicrobial peptide. Forms ribbon-like fibrils and exhibits antibacterial activity against Gram-positive M.luteus (By similarity). Also exhibits antibacterial activity against Gram-negative E.coli and P.fluorescens (By similarity).</text>
</comment>
<comment type="PTM">
    <text evidence="1">Proteolytically cleaved by proteinase PRTN3 into antibacterial peptide LL-37 (By similarity). Proteolytically cleaved by cathepsin CTSG and neutrophil elastase ELANE (By similarity).</text>
</comment>
<comment type="PTM">
    <molecule>Antibacterial peptide LL-37</molecule>
    <text evidence="1">Resistant to proteolytic degradation in solution, and when bound to both zwitterionic (mimicking mammalian membranes) and negatively charged membranes (mimicking bacterial membranes).</text>
</comment>
<comment type="PTM">
    <text evidence="1">After secretion onto the skin surface, the CAMP gene product is processed by a serine protease-dependent mechanism into multiple novel antimicrobial peptides distinct from and shorter than cathelicidin LL-37 (By similarity). These peptides show enhanced antimicrobial action, acquiring the ability to kill skin pathogens such as S.aureus, E.coli and C.albicans. These peptides have lost the ability to stimulate CXCL8/IL8 release from keratinocytes (By similarity). The peptides act synergistically, killing bacteria at lower concentrations when present together, and maintain activity at increased salt condition (By similarity).</text>
</comment>
<comment type="similarity">
    <text evidence="4">Belongs to the cathelicidin family.</text>
</comment>
<feature type="signal peptide" evidence="3">
    <location>
        <begin position="1"/>
        <end position="30"/>
    </location>
</feature>
<feature type="propeptide" id="PRO_0000251749" description="Cathelin-like domain (CLD)" evidence="1">
    <location>
        <begin position="31"/>
        <end position="131"/>
    </location>
</feature>
<feature type="peptide" id="PRO_0000251750" description="Antibacterial peptide FALL-39" evidence="1">
    <location>
        <begin position="132"/>
        <end position="170"/>
    </location>
</feature>
<feature type="peptide" id="PRO_0000251751" description="Antibacterial peptide LL-37" evidence="1">
    <location>
        <begin position="134"/>
        <end position="170"/>
    </location>
</feature>
<feature type="region of interest" description="Active core" evidence="1">
    <location>
        <begin position="150"/>
        <end position="162"/>
    </location>
</feature>
<feature type="disulfide bond" evidence="1">
    <location>
        <begin position="86"/>
        <end position="97"/>
    </location>
</feature>
<feature type="disulfide bond" evidence="1">
    <location>
        <begin position="108"/>
        <end position="125"/>
    </location>
</feature>
<organism>
    <name type="scientific">Chlorocebus aethiops</name>
    <name type="common">Green monkey</name>
    <name type="synonym">Cercopithecus aethiops</name>
    <dbReference type="NCBI Taxonomy" id="9534"/>
    <lineage>
        <taxon>Eukaryota</taxon>
        <taxon>Metazoa</taxon>
        <taxon>Chordata</taxon>
        <taxon>Craniata</taxon>
        <taxon>Vertebrata</taxon>
        <taxon>Euteleostomi</taxon>
        <taxon>Mammalia</taxon>
        <taxon>Eutheria</taxon>
        <taxon>Euarchontoglires</taxon>
        <taxon>Primates</taxon>
        <taxon>Haplorrhini</taxon>
        <taxon>Catarrhini</taxon>
        <taxon>Cercopithecidae</taxon>
        <taxon>Cercopithecinae</taxon>
        <taxon>Chlorocebus</taxon>
    </lineage>
</organism>
<keyword id="KW-0044">Antibiotic</keyword>
<keyword id="KW-0929">Antimicrobial</keyword>
<keyword id="KW-0165">Cleavage on pair of basic residues</keyword>
<keyword id="KW-1015">Disulfide bond</keyword>
<keyword id="KW-0391">Immunity</keyword>
<keyword id="KW-0399">Innate immunity</keyword>
<keyword id="KW-0964">Secreted</keyword>
<keyword id="KW-0732">Signal</keyword>
<protein>
    <recommendedName>
        <fullName evidence="1">Cathelicidin antimicrobial peptide</fullName>
    </recommendedName>
    <component>
        <recommendedName>
            <fullName evidence="1">Antibacterial peptide FALL-39</fullName>
        </recommendedName>
        <alternativeName>
            <fullName evidence="1">FALL-39 peptide antibiotic</fullName>
        </alternativeName>
    </component>
    <component>
        <recommendedName>
            <fullName evidence="1">Antibacterial peptide LL-37</fullName>
        </recommendedName>
    </component>
</protein>
<evidence type="ECO:0000250" key="1">
    <source>
        <dbReference type="UniProtKB" id="P49913"/>
    </source>
</evidence>
<evidence type="ECO:0000250" key="2">
    <source>
        <dbReference type="UniProtKB" id="P54229"/>
    </source>
</evidence>
<evidence type="ECO:0000255" key="3"/>
<evidence type="ECO:0000305" key="4"/>
<dbReference type="EMBL" id="DQ471356">
    <property type="protein sequence ID" value="ABE96620.1"/>
    <property type="molecule type" value="Genomic_DNA"/>
</dbReference>
<dbReference type="SMR" id="Q1KLY6"/>
<dbReference type="GO" id="GO:0005615">
    <property type="term" value="C:extracellular space"/>
    <property type="evidence" value="ECO:0007669"/>
    <property type="project" value="TreeGrafter"/>
</dbReference>
<dbReference type="GO" id="GO:0031982">
    <property type="term" value="C:vesicle"/>
    <property type="evidence" value="ECO:0007669"/>
    <property type="project" value="UniProtKB-SubCell"/>
</dbReference>
<dbReference type="GO" id="GO:0001530">
    <property type="term" value="F:lipopolysaccharide binding"/>
    <property type="evidence" value="ECO:0007669"/>
    <property type="project" value="TreeGrafter"/>
</dbReference>
<dbReference type="GO" id="GO:0061844">
    <property type="term" value="P:antimicrobial humoral immune response mediated by antimicrobial peptide"/>
    <property type="evidence" value="ECO:0007669"/>
    <property type="project" value="TreeGrafter"/>
</dbReference>
<dbReference type="GO" id="GO:0050829">
    <property type="term" value="P:defense response to Gram-negative bacterium"/>
    <property type="evidence" value="ECO:0007669"/>
    <property type="project" value="TreeGrafter"/>
</dbReference>
<dbReference type="GO" id="GO:0050830">
    <property type="term" value="P:defense response to Gram-positive bacterium"/>
    <property type="evidence" value="ECO:0007669"/>
    <property type="project" value="TreeGrafter"/>
</dbReference>
<dbReference type="GO" id="GO:0045087">
    <property type="term" value="P:innate immune response"/>
    <property type="evidence" value="ECO:0007669"/>
    <property type="project" value="UniProtKB-KW"/>
</dbReference>
<dbReference type="GO" id="GO:0042119">
    <property type="term" value="P:neutrophil activation"/>
    <property type="evidence" value="ECO:0000250"/>
    <property type="project" value="UniProtKB"/>
</dbReference>
<dbReference type="FunFam" id="3.10.450.10:FF:000003">
    <property type="entry name" value="Cathelicidin antimicrobial peptide"/>
    <property type="match status" value="1"/>
</dbReference>
<dbReference type="Gene3D" id="3.10.450.10">
    <property type="match status" value="1"/>
</dbReference>
<dbReference type="InterPro" id="IPR001894">
    <property type="entry name" value="Cathelicidin-like"/>
</dbReference>
<dbReference type="InterPro" id="IPR018216">
    <property type="entry name" value="Cathelicidin_CS"/>
</dbReference>
<dbReference type="InterPro" id="IPR022746">
    <property type="entry name" value="Cathlecidin_C"/>
</dbReference>
<dbReference type="InterPro" id="IPR046350">
    <property type="entry name" value="Cystatin_sf"/>
</dbReference>
<dbReference type="PANTHER" id="PTHR10206">
    <property type="entry name" value="CATHELICIDIN"/>
    <property type="match status" value="1"/>
</dbReference>
<dbReference type="PANTHER" id="PTHR10206:SF2">
    <property type="entry name" value="CATHELICIDIN ANTIMICROBIAL PEPTIDE"/>
    <property type="match status" value="1"/>
</dbReference>
<dbReference type="Pfam" id="PF12153">
    <property type="entry name" value="CAP18_C"/>
    <property type="match status" value="1"/>
</dbReference>
<dbReference type="Pfam" id="PF00666">
    <property type="entry name" value="Cathelicidins"/>
    <property type="match status" value="1"/>
</dbReference>
<dbReference type="SUPFAM" id="SSF54403">
    <property type="entry name" value="Cystatin/monellin"/>
    <property type="match status" value="1"/>
</dbReference>
<dbReference type="PROSITE" id="PS00947">
    <property type="entry name" value="CATHELICIDINS_2"/>
    <property type="match status" value="1"/>
</dbReference>
<gene>
    <name evidence="1" type="primary">CAMP</name>
</gene>
<sequence>MKTQRDGPSLGRWSLVLLLLGLVMPLAIVAQVLSYQEAVLRAIEGINQRSSDANLYRLLDLDPRPTMDGDPDTPKPVSFTVKETVCPRTTQKSPEDCDFKEDGLVKRCVGTVTLNQARDSFDISCDKDNRRFARLGKFFRKVKKKIGGGLKKIGQKIKDFLGNLVPRTAS</sequence>
<reference key="1">
    <citation type="journal article" date="2006" name="J. Biol. Chem.">
        <title>Evolution of the primate cathelicidin. Correlation between structural variations and antimicrobial activity.</title>
        <authorList>
            <person name="Zelezetsky I."/>
            <person name="Pontillo A."/>
            <person name="Puzzi L."/>
            <person name="Antcheva N."/>
            <person name="Segat L."/>
            <person name="Pacor S."/>
            <person name="Crovella S."/>
            <person name="Tossi A."/>
        </authorList>
    </citation>
    <scope>NUCLEOTIDE SEQUENCE [GENOMIC DNA]</scope>
</reference>
<accession>Q1KLY6</accession>
<name>CAMP_CHLAE</name>